<name>XKDK_BACSU</name>
<organism>
    <name type="scientific">Bacillus subtilis (strain 168)</name>
    <dbReference type="NCBI Taxonomy" id="224308"/>
    <lineage>
        <taxon>Bacteria</taxon>
        <taxon>Bacillati</taxon>
        <taxon>Bacillota</taxon>
        <taxon>Bacilli</taxon>
        <taxon>Bacillales</taxon>
        <taxon>Bacillaceae</taxon>
        <taxon>Bacillus</taxon>
    </lineage>
</organism>
<feature type="chain" id="PRO_0000066025" description="Phage-like element PBSX protein XkdK">
    <location>
        <begin position="1"/>
        <end position="466"/>
    </location>
</feature>
<feature type="sequence conflict" description="In Ref. 1; CAA94066." evidence="1" ref="1">
    <original>AVQPVDAAEKFYFNVEVN</original>
    <variation>LYSLSTQQKNSTLMWR</variation>
    <location>
        <begin position="449"/>
        <end position="466"/>
    </location>
</feature>
<accession>P54331</accession>
<sequence length="466" mass="50185">MNGGTFTTGKEKERAGIYFNFKTTAQERVSLSERGTVALPVASSWGEAKTFVSISSVEDLNKKVGLSIDDPSLLLLREAKKNAKTVLMYRLTEGVRASADIAEGVKATAVYGGTKGNDIIIRINQNVLDANSFDVTTYMDESEVDKQTVKKAEELTANGYVTFTGTGDLSSTIPLTGSEGDTAAETLNASAGIRLSGGTDKAPVNSDYTDFLAAAETESFDVIALPVAEGDQLKATFAAFIKRLRDGQGQKVQGVTANYAGDYEGIINVTEGVLLEDGTEVTPDKATAWVAGASAGATFNQSLTFVEYEGAVDVLHRLDHDTIVERLGKGEFLFTFDARDKSVSVEKDINSLVTFTAEKNKKFAKNKIVRVLDAVNNDLTRELKALIKSRKGSGSDIPASEDGLQYVKTMITQYMTTLQDAGGITGFDSDEDITISMNEDRDGFLIDLAVQPVDAAEKFYFNVEVN</sequence>
<comment type="similarity">
    <text evidence="1">Belongs to the myoviridae tail sheath protein family.</text>
</comment>
<reference key="1">
    <citation type="submission" date="1996-03" db="EMBL/GenBank/DDBJ databases">
        <authorList>
            <person name="Krogh S."/>
            <person name="O'Reilly M."/>
            <person name="Nolan N."/>
            <person name="Devine K.M."/>
        </authorList>
    </citation>
    <scope>NUCLEOTIDE SEQUENCE [GENOMIC DNA]</scope>
    <source>
        <strain>168</strain>
    </source>
</reference>
<reference key="2">
    <citation type="journal article" date="1997" name="Nature">
        <title>The complete genome sequence of the Gram-positive bacterium Bacillus subtilis.</title>
        <authorList>
            <person name="Kunst F."/>
            <person name="Ogasawara N."/>
            <person name="Moszer I."/>
            <person name="Albertini A.M."/>
            <person name="Alloni G."/>
            <person name="Azevedo V."/>
            <person name="Bertero M.G."/>
            <person name="Bessieres P."/>
            <person name="Bolotin A."/>
            <person name="Borchert S."/>
            <person name="Borriss R."/>
            <person name="Boursier L."/>
            <person name="Brans A."/>
            <person name="Braun M."/>
            <person name="Brignell S.C."/>
            <person name="Bron S."/>
            <person name="Brouillet S."/>
            <person name="Bruschi C.V."/>
            <person name="Caldwell B."/>
            <person name="Capuano V."/>
            <person name="Carter N.M."/>
            <person name="Choi S.-K."/>
            <person name="Codani J.-J."/>
            <person name="Connerton I.F."/>
            <person name="Cummings N.J."/>
            <person name="Daniel R.A."/>
            <person name="Denizot F."/>
            <person name="Devine K.M."/>
            <person name="Duesterhoeft A."/>
            <person name="Ehrlich S.D."/>
            <person name="Emmerson P.T."/>
            <person name="Entian K.-D."/>
            <person name="Errington J."/>
            <person name="Fabret C."/>
            <person name="Ferrari E."/>
            <person name="Foulger D."/>
            <person name="Fritz C."/>
            <person name="Fujita M."/>
            <person name="Fujita Y."/>
            <person name="Fuma S."/>
            <person name="Galizzi A."/>
            <person name="Galleron N."/>
            <person name="Ghim S.-Y."/>
            <person name="Glaser P."/>
            <person name="Goffeau A."/>
            <person name="Golightly E.J."/>
            <person name="Grandi G."/>
            <person name="Guiseppi G."/>
            <person name="Guy B.J."/>
            <person name="Haga K."/>
            <person name="Haiech J."/>
            <person name="Harwood C.R."/>
            <person name="Henaut A."/>
            <person name="Hilbert H."/>
            <person name="Holsappel S."/>
            <person name="Hosono S."/>
            <person name="Hullo M.-F."/>
            <person name="Itaya M."/>
            <person name="Jones L.-M."/>
            <person name="Joris B."/>
            <person name="Karamata D."/>
            <person name="Kasahara Y."/>
            <person name="Klaerr-Blanchard M."/>
            <person name="Klein C."/>
            <person name="Kobayashi Y."/>
            <person name="Koetter P."/>
            <person name="Koningstein G."/>
            <person name="Krogh S."/>
            <person name="Kumano M."/>
            <person name="Kurita K."/>
            <person name="Lapidus A."/>
            <person name="Lardinois S."/>
            <person name="Lauber J."/>
            <person name="Lazarevic V."/>
            <person name="Lee S.-M."/>
            <person name="Levine A."/>
            <person name="Liu H."/>
            <person name="Masuda S."/>
            <person name="Mauel C."/>
            <person name="Medigue C."/>
            <person name="Medina N."/>
            <person name="Mellado R.P."/>
            <person name="Mizuno M."/>
            <person name="Moestl D."/>
            <person name="Nakai S."/>
            <person name="Noback M."/>
            <person name="Noone D."/>
            <person name="O'Reilly M."/>
            <person name="Ogawa K."/>
            <person name="Ogiwara A."/>
            <person name="Oudega B."/>
            <person name="Park S.-H."/>
            <person name="Parro V."/>
            <person name="Pohl T.M."/>
            <person name="Portetelle D."/>
            <person name="Porwollik S."/>
            <person name="Prescott A.M."/>
            <person name="Presecan E."/>
            <person name="Pujic P."/>
            <person name="Purnelle B."/>
            <person name="Rapoport G."/>
            <person name="Rey M."/>
            <person name="Reynolds S."/>
            <person name="Rieger M."/>
            <person name="Rivolta C."/>
            <person name="Rocha E."/>
            <person name="Roche B."/>
            <person name="Rose M."/>
            <person name="Sadaie Y."/>
            <person name="Sato T."/>
            <person name="Scanlan E."/>
            <person name="Schleich S."/>
            <person name="Schroeter R."/>
            <person name="Scoffone F."/>
            <person name="Sekiguchi J."/>
            <person name="Sekowska A."/>
            <person name="Seror S.J."/>
            <person name="Serror P."/>
            <person name="Shin B.-S."/>
            <person name="Soldo B."/>
            <person name="Sorokin A."/>
            <person name="Tacconi E."/>
            <person name="Takagi T."/>
            <person name="Takahashi H."/>
            <person name="Takemaru K."/>
            <person name="Takeuchi M."/>
            <person name="Tamakoshi A."/>
            <person name="Tanaka T."/>
            <person name="Terpstra P."/>
            <person name="Tognoni A."/>
            <person name="Tosato V."/>
            <person name="Uchiyama S."/>
            <person name="Vandenbol M."/>
            <person name="Vannier F."/>
            <person name="Vassarotti A."/>
            <person name="Viari A."/>
            <person name="Wambutt R."/>
            <person name="Wedler E."/>
            <person name="Wedler H."/>
            <person name="Weitzenegger T."/>
            <person name="Winters P."/>
            <person name="Wipat A."/>
            <person name="Yamamoto H."/>
            <person name="Yamane K."/>
            <person name="Yasumoto K."/>
            <person name="Yata K."/>
            <person name="Yoshida K."/>
            <person name="Yoshikawa H.-F."/>
            <person name="Zumstein E."/>
            <person name="Yoshikawa H."/>
            <person name="Danchin A."/>
        </authorList>
    </citation>
    <scope>NUCLEOTIDE SEQUENCE [LARGE SCALE GENOMIC DNA]</scope>
    <source>
        <strain>168</strain>
    </source>
</reference>
<reference key="3">
    <citation type="journal article" date="2009" name="Microbiology">
        <title>From a consortium sequence to a unified sequence: the Bacillus subtilis 168 reference genome a decade later.</title>
        <authorList>
            <person name="Barbe V."/>
            <person name="Cruveiller S."/>
            <person name="Kunst F."/>
            <person name="Lenoble P."/>
            <person name="Meurice G."/>
            <person name="Sekowska A."/>
            <person name="Vallenet D."/>
            <person name="Wang T."/>
            <person name="Moszer I."/>
            <person name="Medigue C."/>
            <person name="Danchin A."/>
        </authorList>
    </citation>
    <scope>SEQUENCE REVISION TO C-TERMINUS</scope>
</reference>
<dbReference type="EMBL" id="Z70177">
    <property type="protein sequence ID" value="CAA94066.1"/>
    <property type="molecule type" value="Genomic_DNA"/>
</dbReference>
<dbReference type="EMBL" id="AL009126">
    <property type="protein sequence ID" value="CAB13122.2"/>
    <property type="molecule type" value="Genomic_DNA"/>
</dbReference>
<dbReference type="PIR" id="C69732">
    <property type="entry name" value="C69732"/>
</dbReference>
<dbReference type="RefSeq" id="NP_389147.2">
    <property type="nucleotide sequence ID" value="NC_000964.3"/>
</dbReference>
<dbReference type="RefSeq" id="WP_003245369.1">
    <property type="nucleotide sequence ID" value="NZ_OZ025638.1"/>
</dbReference>
<dbReference type="SMR" id="P54331"/>
<dbReference type="FunCoup" id="P54331">
    <property type="interactions" value="50"/>
</dbReference>
<dbReference type="STRING" id="224308.BSU12650"/>
<dbReference type="PaxDb" id="224308-BSU12650"/>
<dbReference type="EnsemblBacteria" id="CAB13122">
    <property type="protein sequence ID" value="CAB13122"/>
    <property type="gene ID" value="BSU_12650"/>
</dbReference>
<dbReference type="GeneID" id="939943"/>
<dbReference type="KEGG" id="bsu:BSU12650"/>
<dbReference type="PATRIC" id="fig|224308.179.peg.1371"/>
<dbReference type="eggNOG" id="ENOG502Z8I6">
    <property type="taxonomic scope" value="Bacteria"/>
</dbReference>
<dbReference type="InParanoid" id="P54331"/>
<dbReference type="OrthoDB" id="89060at2"/>
<dbReference type="PhylomeDB" id="P54331"/>
<dbReference type="BioCyc" id="BSUB:BSU12650-MONOMER"/>
<dbReference type="Proteomes" id="UP000001570">
    <property type="component" value="Chromosome"/>
</dbReference>
<dbReference type="Gene3D" id="2.60.40.4290">
    <property type="match status" value="1"/>
</dbReference>
<dbReference type="Gene3D" id="3.30.1370.220">
    <property type="match status" value="1"/>
</dbReference>
<dbReference type="Gene3D" id="3.30.1490.360">
    <property type="match status" value="1"/>
</dbReference>
<dbReference type="Gene3D" id="3.30.360.90">
    <property type="match status" value="1"/>
</dbReference>
<dbReference type="Gene3D" id="3.40.50.11790">
    <property type="match status" value="1"/>
</dbReference>
<dbReference type="InterPro" id="IPR054564">
    <property type="entry name" value="Gp18_domIII_N"/>
</dbReference>
<dbReference type="InterPro" id="IPR035326">
    <property type="entry name" value="Phage_sheath-like_beta"/>
</dbReference>
<dbReference type="InterPro" id="IPR035089">
    <property type="entry name" value="Phage_sheath_subtilisin"/>
</dbReference>
<dbReference type="InterPro" id="IPR020287">
    <property type="entry name" value="Tail_sheath_C"/>
</dbReference>
<dbReference type="Pfam" id="PF22671">
    <property type="entry name" value="Gp18_domIII_N"/>
    <property type="match status" value="1"/>
</dbReference>
<dbReference type="Pfam" id="PF04984">
    <property type="entry name" value="Phage_sheath_1"/>
    <property type="match status" value="1"/>
</dbReference>
<dbReference type="Pfam" id="PF17482">
    <property type="entry name" value="Phage_sheath_1C"/>
    <property type="match status" value="1"/>
</dbReference>
<dbReference type="Pfam" id="PF17481">
    <property type="entry name" value="Phage_sheath_domII"/>
    <property type="match status" value="1"/>
</dbReference>
<protein>
    <recommendedName>
        <fullName>Phage-like element PBSX protein XkdK</fullName>
    </recommendedName>
</protein>
<evidence type="ECO:0000305" key="1"/>
<proteinExistence type="inferred from homology"/>
<gene>
    <name type="primary">xkdK</name>
    <name type="ordered locus">BSU12650</name>
</gene>
<keyword id="KW-1185">Reference proteome</keyword>